<proteinExistence type="evidence at protein level"/>
<name>KPCL_MOUSE</name>
<organism>
    <name type="scientific">Mus musculus</name>
    <name type="common">Mouse</name>
    <dbReference type="NCBI Taxonomy" id="10090"/>
    <lineage>
        <taxon>Eukaryota</taxon>
        <taxon>Metazoa</taxon>
        <taxon>Chordata</taxon>
        <taxon>Craniata</taxon>
        <taxon>Vertebrata</taxon>
        <taxon>Euteleostomi</taxon>
        <taxon>Mammalia</taxon>
        <taxon>Eutheria</taxon>
        <taxon>Euarchontoglires</taxon>
        <taxon>Glires</taxon>
        <taxon>Rodentia</taxon>
        <taxon>Myomorpha</taxon>
        <taxon>Muroidea</taxon>
        <taxon>Muridae</taxon>
        <taxon>Murinae</taxon>
        <taxon>Mus</taxon>
        <taxon>Mus</taxon>
    </lineage>
</organism>
<dbReference type="EC" id="2.7.11.13"/>
<dbReference type="EMBL" id="D90242">
    <property type="protein sequence ID" value="BAA14288.1"/>
    <property type="molecule type" value="mRNA"/>
</dbReference>
<dbReference type="EMBL" id="AK164044">
    <property type="protein sequence ID" value="BAE37603.1"/>
    <property type="molecule type" value="mRNA"/>
</dbReference>
<dbReference type="EMBL" id="BC031121">
    <property type="protein sequence ID" value="AAH31121.1"/>
    <property type="molecule type" value="mRNA"/>
</dbReference>
<dbReference type="CCDS" id="CCDS25976.1"/>
<dbReference type="PIR" id="A23690">
    <property type="entry name" value="A23690"/>
</dbReference>
<dbReference type="RefSeq" id="NP_001300906.1">
    <property type="nucleotide sequence ID" value="NM_001313977.1"/>
</dbReference>
<dbReference type="RefSeq" id="NP_032882.2">
    <property type="nucleotide sequence ID" value="NM_008856.4"/>
</dbReference>
<dbReference type="SMR" id="P23298"/>
<dbReference type="BioGRID" id="202199">
    <property type="interactions" value="2"/>
</dbReference>
<dbReference type="CORUM" id="P23298"/>
<dbReference type="FunCoup" id="P23298">
    <property type="interactions" value="674"/>
</dbReference>
<dbReference type="IntAct" id="P23298">
    <property type="interactions" value="1"/>
</dbReference>
<dbReference type="STRING" id="10090.ENSMUSP00000021527"/>
<dbReference type="BindingDB" id="P23298"/>
<dbReference type="ChEMBL" id="CHEMBL4992"/>
<dbReference type="iPTMnet" id="P23298"/>
<dbReference type="PhosphoSitePlus" id="P23298"/>
<dbReference type="jPOST" id="P23298"/>
<dbReference type="PaxDb" id="10090-ENSMUSP00000021527"/>
<dbReference type="ProteomicsDB" id="264863"/>
<dbReference type="DNASU" id="18755"/>
<dbReference type="Ensembl" id="ENSMUST00000021527.15">
    <property type="protein sequence ID" value="ENSMUSP00000021527.9"/>
    <property type="gene ID" value="ENSMUSG00000021108.19"/>
</dbReference>
<dbReference type="GeneID" id="18755"/>
<dbReference type="KEGG" id="mmu:18755"/>
<dbReference type="UCSC" id="uc007nwn.1">
    <property type="organism name" value="mouse"/>
</dbReference>
<dbReference type="AGR" id="MGI:97600"/>
<dbReference type="CTD" id="5583"/>
<dbReference type="MGI" id="MGI:97600">
    <property type="gene designation" value="Prkch"/>
</dbReference>
<dbReference type="VEuPathDB" id="HostDB:ENSMUSG00000021108"/>
<dbReference type="eggNOG" id="KOG0694">
    <property type="taxonomic scope" value="Eukaryota"/>
</dbReference>
<dbReference type="GeneTree" id="ENSGT00940000158220"/>
<dbReference type="InParanoid" id="P23298"/>
<dbReference type="OMA" id="MTKNPNM"/>
<dbReference type="OrthoDB" id="63267at2759"/>
<dbReference type="PhylomeDB" id="P23298"/>
<dbReference type="TreeFam" id="TF351133"/>
<dbReference type="BRENDA" id="2.7.11.13">
    <property type="organism ID" value="3474"/>
</dbReference>
<dbReference type="Reactome" id="R-MMU-114508">
    <property type="pathway name" value="Effects of PIP2 hydrolysis"/>
</dbReference>
<dbReference type="BioGRID-ORCS" id="18755">
    <property type="hits" value="3 hits in 80 CRISPR screens"/>
</dbReference>
<dbReference type="ChiTaRS" id="Prkch">
    <property type="organism name" value="mouse"/>
</dbReference>
<dbReference type="PRO" id="PR:P23298"/>
<dbReference type="Proteomes" id="UP000000589">
    <property type="component" value="Chromosome 12"/>
</dbReference>
<dbReference type="RNAct" id="P23298">
    <property type="molecule type" value="protein"/>
</dbReference>
<dbReference type="Bgee" id="ENSMUSG00000021108">
    <property type="expression patterns" value="Expressed in ectoplacental cone and 189 other cell types or tissues"/>
</dbReference>
<dbReference type="ExpressionAtlas" id="P23298">
    <property type="expression patterns" value="baseline and differential"/>
</dbReference>
<dbReference type="GO" id="GO:0005911">
    <property type="term" value="C:cell-cell junction"/>
    <property type="evidence" value="ECO:0000314"/>
    <property type="project" value="MGI"/>
</dbReference>
<dbReference type="GO" id="GO:0005829">
    <property type="term" value="C:cytosol"/>
    <property type="evidence" value="ECO:0000314"/>
    <property type="project" value="UniProtKB"/>
</dbReference>
<dbReference type="GO" id="GO:0005886">
    <property type="term" value="C:plasma membrane"/>
    <property type="evidence" value="ECO:0000314"/>
    <property type="project" value="UniProtKB"/>
</dbReference>
<dbReference type="GO" id="GO:0005524">
    <property type="term" value="F:ATP binding"/>
    <property type="evidence" value="ECO:0007669"/>
    <property type="project" value="UniProtKB-KW"/>
</dbReference>
<dbReference type="GO" id="GO:0004699">
    <property type="term" value="F:diacylglycerol-dependent, calcium-independent serine/threonine kinase activity"/>
    <property type="evidence" value="ECO:0007669"/>
    <property type="project" value="Ensembl"/>
</dbReference>
<dbReference type="GO" id="GO:0106310">
    <property type="term" value="F:protein serine kinase activity"/>
    <property type="evidence" value="ECO:0007669"/>
    <property type="project" value="RHEA"/>
</dbReference>
<dbReference type="GO" id="GO:0031267">
    <property type="term" value="F:small GTPase binding"/>
    <property type="evidence" value="ECO:0000353"/>
    <property type="project" value="UniProtKB"/>
</dbReference>
<dbReference type="GO" id="GO:0008270">
    <property type="term" value="F:zinc ion binding"/>
    <property type="evidence" value="ECO:0007669"/>
    <property type="project" value="UniProtKB-KW"/>
</dbReference>
<dbReference type="GO" id="GO:0030154">
    <property type="term" value="P:cell differentiation"/>
    <property type="evidence" value="ECO:0007669"/>
    <property type="project" value="UniProtKB-KW"/>
</dbReference>
<dbReference type="GO" id="GO:0034351">
    <property type="term" value="P:negative regulation of glial cell apoptotic process"/>
    <property type="evidence" value="ECO:0000250"/>
    <property type="project" value="UniProtKB"/>
</dbReference>
<dbReference type="GO" id="GO:0141212">
    <property type="term" value="P:phospholipase C/protein kinase C signal transduction"/>
    <property type="evidence" value="ECO:0007669"/>
    <property type="project" value="Ensembl"/>
</dbReference>
<dbReference type="GO" id="GO:0050861">
    <property type="term" value="P:positive regulation of B cell receptor signaling pathway"/>
    <property type="evidence" value="ECO:0000250"/>
    <property type="project" value="UniProtKB"/>
</dbReference>
<dbReference type="GO" id="GO:0060252">
    <property type="term" value="P:positive regulation of glial cell proliferation"/>
    <property type="evidence" value="ECO:0000250"/>
    <property type="project" value="UniProtKB"/>
</dbReference>
<dbReference type="GO" id="GO:0045618">
    <property type="term" value="P:positive regulation of keratinocyte differentiation"/>
    <property type="evidence" value="ECO:0000315"/>
    <property type="project" value="UniProtKB"/>
</dbReference>
<dbReference type="GO" id="GO:0010744">
    <property type="term" value="P:positive regulation of macrophage derived foam cell differentiation"/>
    <property type="evidence" value="ECO:0000315"/>
    <property type="project" value="UniProtKB"/>
</dbReference>
<dbReference type="GO" id="GO:0051092">
    <property type="term" value="P:positive regulation of NF-kappaB transcription factor activity"/>
    <property type="evidence" value="ECO:0000250"/>
    <property type="project" value="UniProtKB"/>
</dbReference>
<dbReference type="GO" id="GO:0006468">
    <property type="term" value="P:protein phosphorylation"/>
    <property type="evidence" value="ECO:0000250"/>
    <property type="project" value="UniProtKB"/>
</dbReference>
<dbReference type="GO" id="GO:2000810">
    <property type="term" value="P:regulation of bicellular tight junction assembly"/>
    <property type="evidence" value="ECO:0000250"/>
    <property type="project" value="UniProtKB"/>
</dbReference>
<dbReference type="CDD" id="cd20835">
    <property type="entry name" value="C1_nPKC_epsilon-like_rpt1"/>
    <property type="match status" value="1"/>
</dbReference>
<dbReference type="CDD" id="cd20838">
    <property type="entry name" value="C1_nPKC_epsilon-like_rpt2"/>
    <property type="match status" value="1"/>
</dbReference>
<dbReference type="CDD" id="cd04014">
    <property type="entry name" value="C2_PKC_epsilon"/>
    <property type="match status" value="1"/>
</dbReference>
<dbReference type="CDD" id="cd05590">
    <property type="entry name" value="STKc_nPKC_eta"/>
    <property type="match status" value="1"/>
</dbReference>
<dbReference type="FunFam" id="3.30.200.20:FF:000080">
    <property type="entry name" value="Protein kinase C"/>
    <property type="match status" value="1"/>
</dbReference>
<dbReference type="FunFam" id="3.30.60.20:FF:000003">
    <property type="entry name" value="Protein kinase C delta"/>
    <property type="match status" value="1"/>
</dbReference>
<dbReference type="FunFam" id="1.10.510.10:FF:000126">
    <property type="entry name" value="Protein kinase C epsilon"/>
    <property type="match status" value="1"/>
</dbReference>
<dbReference type="FunFam" id="2.60.40.150:FF:000056">
    <property type="entry name" value="Protein kinase C epsilon"/>
    <property type="match status" value="1"/>
</dbReference>
<dbReference type="FunFam" id="3.30.60.20:FF:000024">
    <property type="entry name" value="Protein kinase C epsilon"/>
    <property type="match status" value="1"/>
</dbReference>
<dbReference type="Gene3D" id="3.30.60.20">
    <property type="match status" value="2"/>
</dbReference>
<dbReference type="Gene3D" id="2.60.40.150">
    <property type="entry name" value="C2 domain"/>
    <property type="match status" value="1"/>
</dbReference>
<dbReference type="Gene3D" id="3.30.200.20">
    <property type="entry name" value="Phosphorylase Kinase, domain 1"/>
    <property type="match status" value="1"/>
</dbReference>
<dbReference type="Gene3D" id="1.10.510.10">
    <property type="entry name" value="Transferase(Phosphotransferase) domain 1"/>
    <property type="match status" value="1"/>
</dbReference>
<dbReference type="InterPro" id="IPR000961">
    <property type="entry name" value="AGC-kinase_C"/>
</dbReference>
<dbReference type="InterPro" id="IPR046349">
    <property type="entry name" value="C1-like_sf"/>
</dbReference>
<dbReference type="InterPro" id="IPR000008">
    <property type="entry name" value="C2_dom"/>
</dbReference>
<dbReference type="InterPro" id="IPR035892">
    <property type="entry name" value="C2_domain_sf"/>
</dbReference>
<dbReference type="InterPro" id="IPR020454">
    <property type="entry name" value="DAG/PE-bd"/>
</dbReference>
<dbReference type="InterPro" id="IPR011009">
    <property type="entry name" value="Kinase-like_dom_sf"/>
</dbReference>
<dbReference type="InterPro" id="IPR034665">
    <property type="entry name" value="nPKC_eta"/>
</dbReference>
<dbReference type="InterPro" id="IPR002219">
    <property type="entry name" value="PE/DAG-bd"/>
</dbReference>
<dbReference type="InterPro" id="IPR027431">
    <property type="entry name" value="PKC_eta"/>
</dbReference>
<dbReference type="InterPro" id="IPR017892">
    <property type="entry name" value="Pkinase_C"/>
</dbReference>
<dbReference type="InterPro" id="IPR014376">
    <property type="entry name" value="Prot_kin_PKC_delta"/>
</dbReference>
<dbReference type="InterPro" id="IPR000719">
    <property type="entry name" value="Prot_kinase_dom"/>
</dbReference>
<dbReference type="InterPro" id="IPR017441">
    <property type="entry name" value="Protein_kinase_ATP_BS"/>
</dbReference>
<dbReference type="InterPro" id="IPR008271">
    <property type="entry name" value="Ser/Thr_kinase_AS"/>
</dbReference>
<dbReference type="PANTHER" id="PTHR24351">
    <property type="entry name" value="RIBOSOMAL PROTEIN S6 KINASE"/>
    <property type="match status" value="1"/>
</dbReference>
<dbReference type="Pfam" id="PF00130">
    <property type="entry name" value="C1_1"/>
    <property type="match status" value="2"/>
</dbReference>
<dbReference type="Pfam" id="PF00168">
    <property type="entry name" value="C2"/>
    <property type="match status" value="1"/>
</dbReference>
<dbReference type="Pfam" id="PF00069">
    <property type="entry name" value="Pkinase"/>
    <property type="match status" value="1"/>
</dbReference>
<dbReference type="Pfam" id="PF00433">
    <property type="entry name" value="Pkinase_C"/>
    <property type="match status" value="1"/>
</dbReference>
<dbReference type="PIRSF" id="PIRSF000551">
    <property type="entry name" value="PKC_delta"/>
    <property type="match status" value="1"/>
</dbReference>
<dbReference type="PIRSF" id="PIRSF501107">
    <property type="entry name" value="Protein_kin_C_eta"/>
    <property type="match status" value="1"/>
</dbReference>
<dbReference type="PRINTS" id="PR00008">
    <property type="entry name" value="DAGPEDOMAIN"/>
</dbReference>
<dbReference type="SMART" id="SM00109">
    <property type="entry name" value="C1"/>
    <property type="match status" value="2"/>
</dbReference>
<dbReference type="SMART" id="SM00239">
    <property type="entry name" value="C2"/>
    <property type="match status" value="1"/>
</dbReference>
<dbReference type="SMART" id="SM00133">
    <property type="entry name" value="S_TK_X"/>
    <property type="match status" value="1"/>
</dbReference>
<dbReference type="SMART" id="SM00220">
    <property type="entry name" value="S_TKc"/>
    <property type="match status" value="1"/>
</dbReference>
<dbReference type="SUPFAM" id="SSF49562">
    <property type="entry name" value="C2 domain (Calcium/lipid-binding domain, CaLB)"/>
    <property type="match status" value="1"/>
</dbReference>
<dbReference type="SUPFAM" id="SSF57889">
    <property type="entry name" value="Cysteine-rich domain"/>
    <property type="match status" value="2"/>
</dbReference>
<dbReference type="SUPFAM" id="SSF56112">
    <property type="entry name" value="Protein kinase-like (PK-like)"/>
    <property type="match status" value="1"/>
</dbReference>
<dbReference type="PROSITE" id="PS51285">
    <property type="entry name" value="AGC_KINASE_CTER"/>
    <property type="match status" value="1"/>
</dbReference>
<dbReference type="PROSITE" id="PS50004">
    <property type="entry name" value="C2"/>
    <property type="match status" value="1"/>
</dbReference>
<dbReference type="PROSITE" id="PS00107">
    <property type="entry name" value="PROTEIN_KINASE_ATP"/>
    <property type="match status" value="1"/>
</dbReference>
<dbReference type="PROSITE" id="PS50011">
    <property type="entry name" value="PROTEIN_KINASE_DOM"/>
    <property type="match status" value="1"/>
</dbReference>
<dbReference type="PROSITE" id="PS00108">
    <property type="entry name" value="PROTEIN_KINASE_ST"/>
    <property type="match status" value="1"/>
</dbReference>
<dbReference type="PROSITE" id="PS00479">
    <property type="entry name" value="ZF_DAG_PE_1"/>
    <property type="match status" value="2"/>
</dbReference>
<dbReference type="PROSITE" id="PS50081">
    <property type="entry name" value="ZF_DAG_PE_2"/>
    <property type="match status" value="2"/>
</dbReference>
<protein>
    <recommendedName>
        <fullName>Protein kinase C eta type</fullName>
        <ecNumber>2.7.11.13</ecNumber>
    </recommendedName>
    <alternativeName>
        <fullName>PKC-L</fullName>
    </alternativeName>
    <alternativeName>
        <fullName>nPKC-eta</fullName>
    </alternativeName>
</protein>
<feature type="chain" id="PRO_0000055706" description="Protein kinase C eta type">
    <location>
        <begin position="1"/>
        <end position="683"/>
    </location>
</feature>
<feature type="domain" description="C2" evidence="4">
    <location>
        <begin position="1"/>
        <end position="118"/>
    </location>
</feature>
<feature type="domain" description="Protein kinase" evidence="5">
    <location>
        <begin position="355"/>
        <end position="614"/>
    </location>
</feature>
<feature type="domain" description="AGC-kinase C-terminal" evidence="7">
    <location>
        <begin position="615"/>
        <end position="683"/>
    </location>
</feature>
<feature type="zinc finger region" description="Phorbol-ester/DAG-type 1" evidence="6">
    <location>
        <begin position="171"/>
        <end position="222"/>
    </location>
</feature>
<feature type="zinc finger region" description="Phorbol-ester/DAG-type 2" evidence="6">
    <location>
        <begin position="245"/>
        <end position="295"/>
    </location>
</feature>
<feature type="active site" description="Proton acceptor" evidence="5 8">
    <location>
        <position position="479"/>
    </location>
</feature>
<feature type="binding site" evidence="5">
    <location>
        <begin position="361"/>
        <end position="369"/>
    </location>
    <ligand>
        <name>ATP</name>
        <dbReference type="ChEBI" id="CHEBI:30616"/>
    </ligand>
</feature>
<feature type="binding site" evidence="5">
    <location>
        <position position="384"/>
    </location>
    <ligand>
        <name>ATP</name>
        <dbReference type="ChEBI" id="CHEBI:30616"/>
    </ligand>
</feature>
<feature type="modified residue" description="Phosphoserine" evidence="2">
    <location>
        <position position="28"/>
    </location>
</feature>
<feature type="modified residue" description="Phosphoserine" evidence="2">
    <location>
        <position position="32"/>
    </location>
</feature>
<feature type="modified residue" description="Phosphoserine" evidence="13">
    <location>
        <position position="317"/>
    </location>
</feature>
<feature type="modified residue" description="Phosphothreonine; by PDPK1" evidence="1">
    <location>
        <position position="513"/>
    </location>
</feature>
<feature type="modified residue" description="Phosphothreonine" evidence="2">
    <location>
        <position position="656"/>
    </location>
</feature>
<feature type="modified residue" description="Phosphoserine" evidence="3">
    <location>
        <position position="675"/>
    </location>
</feature>
<feature type="sequence conflict" description="In Ref. 1; BAA14288." evidence="12" ref="1">
    <original>T</original>
    <variation>R</variation>
    <location>
        <position position="582"/>
    </location>
</feature>
<keyword id="KW-0067">ATP-binding</keyword>
<keyword id="KW-0963">Cytoplasm</keyword>
<keyword id="KW-0221">Differentiation</keyword>
<keyword id="KW-0418">Kinase</keyword>
<keyword id="KW-0479">Metal-binding</keyword>
<keyword id="KW-0547">Nucleotide-binding</keyword>
<keyword id="KW-0597">Phosphoprotein</keyword>
<keyword id="KW-1185">Reference proteome</keyword>
<keyword id="KW-0677">Repeat</keyword>
<keyword id="KW-0723">Serine/threonine-protein kinase</keyword>
<keyword id="KW-0808">Transferase</keyword>
<keyword id="KW-0862">Zinc</keyword>
<keyword id="KW-0863">Zinc-finger</keyword>
<accession>P23298</accession>
<accession>Q8K2K8</accession>
<comment type="function">
    <text evidence="9 10 11">Calcium-independent, phospholipid- and diacylglycerol (DAG)-dependent serine/threonine-protein kinase that is involved in the regulation of cell differentiation in keratinocytes and pre-B cell receptor, mediates regulation of epithelial tight junction integrity and foam cell formation, and is required for glioblastoma proliferation and apoptosis prevention in MCF-7 cells. In keratinocytes, binds and activates the tyrosine kinase FYN, which in turn blocks epidermal growth factor receptor (EGFR) signaling and leads to keratinocyte growth arrest and differentiation. Associates with the cyclin CCNE1-CDK2-CDKN1B complex and inhibits CDK2 kinase activity, leading to RB1 dephosphorylation and thereby G1 arrest in keratinocytes. In association with RALA activates actin depolymerization, which is necessary for keratinocyte differentiation. In the pre-B cell receptor signaling, functions downstream of BLNK by up-regulating IRF4, which in turn activates L chain gene rearrangement. Regulates epithelial tight junctions (TJs) by phosphorylating occludin (OCLN) on threonine residues, which is necessary for the assembly and maintenance of TJs. In association with PLD2 and via TLR4 signaling, is involved in lipopolysaccharide (LPS)-induced RGS2 down-regulation and foam cell formation. Upon PMA stimulation, mediates glioblastoma cell proliferation by activating the mTOR pathway, the PI3K/AKT pathway and the ERK1-dependent phosphorylation of ELK1. Involved in the protection of glioblastoma cells from irradiation-induced apoptosis by preventing caspase-9 activation. In camptothecin-treated MCF-7 cells, regulates NF-kappa-B upstream signaling by activating IKBKB, and confers protection against DNA damage-induced apoptosis. Promotes oncogenic functions of ATF2 in the nucleus while blocking its apoptotic function at mitochondria. Phosphorylates ATF2 which promotes its nuclear retention and transcriptional activity and negatively regulates its mitochondrial localization.</text>
</comment>
<comment type="catalytic activity">
    <reaction>
        <text>L-seryl-[protein] + ATP = O-phospho-L-seryl-[protein] + ADP + H(+)</text>
        <dbReference type="Rhea" id="RHEA:17989"/>
        <dbReference type="Rhea" id="RHEA-COMP:9863"/>
        <dbReference type="Rhea" id="RHEA-COMP:11604"/>
        <dbReference type="ChEBI" id="CHEBI:15378"/>
        <dbReference type="ChEBI" id="CHEBI:29999"/>
        <dbReference type="ChEBI" id="CHEBI:30616"/>
        <dbReference type="ChEBI" id="CHEBI:83421"/>
        <dbReference type="ChEBI" id="CHEBI:456216"/>
        <dbReference type="EC" id="2.7.11.13"/>
    </reaction>
</comment>
<comment type="catalytic activity">
    <reaction>
        <text>L-threonyl-[protein] + ATP = O-phospho-L-threonyl-[protein] + ADP + H(+)</text>
        <dbReference type="Rhea" id="RHEA:46608"/>
        <dbReference type="Rhea" id="RHEA-COMP:11060"/>
        <dbReference type="Rhea" id="RHEA-COMP:11605"/>
        <dbReference type="ChEBI" id="CHEBI:15378"/>
        <dbReference type="ChEBI" id="CHEBI:30013"/>
        <dbReference type="ChEBI" id="CHEBI:30616"/>
        <dbReference type="ChEBI" id="CHEBI:61977"/>
        <dbReference type="ChEBI" id="CHEBI:456216"/>
        <dbReference type="EC" id="2.7.11.13"/>
    </reaction>
</comment>
<comment type="activity regulation">
    <text>Novel PKCs (PRKCD, PRKCE, PRKCH and PRKCQ) are calcium-insensitive, but activated by diacylglycerol (DAG) and phosphatidylserine. Three specific sites; Thr-513 (activation loop of the kinase domain), Thr-656 (turn motif) and Ser-675 (hydrophobic region), need to be phosphorylated for its full activation.</text>
</comment>
<comment type="subunit">
    <text evidence="2 9 11">Interacts with FYN (PubMed:11106751). Interacts with RALA (PubMed:21346190). Interacts with DGKQ (By similarity).</text>
</comment>
<comment type="subcellular location">
    <subcellularLocation>
        <location evidence="9 11">Cytoplasm</location>
    </subcellularLocation>
    <text>Associates with cell membrane during keratinocytes differentiation.</text>
</comment>
<comment type="tissue specificity">
    <text>Predominantly expressed in lung and skin.</text>
</comment>
<comment type="domain">
    <text>The C1 domain, containing the phorbol ester/DAG-type region 1 (C1A) and 2 (C1B), is the diacylglycerol sensor and the C2 domain is a non-calcium binding domain.</text>
</comment>
<comment type="similarity">
    <text evidence="12">Belongs to the protein kinase superfamily. AGC Ser/Thr protein kinase family. PKC subfamily.</text>
</comment>
<evidence type="ECO:0000250" key="1"/>
<evidence type="ECO:0000250" key="2">
    <source>
        <dbReference type="UniProtKB" id="P24723"/>
    </source>
</evidence>
<evidence type="ECO:0000250" key="3">
    <source>
        <dbReference type="UniProtKB" id="Q64617"/>
    </source>
</evidence>
<evidence type="ECO:0000255" key="4">
    <source>
        <dbReference type="PROSITE-ProRule" id="PRU00041"/>
    </source>
</evidence>
<evidence type="ECO:0000255" key="5">
    <source>
        <dbReference type="PROSITE-ProRule" id="PRU00159"/>
    </source>
</evidence>
<evidence type="ECO:0000255" key="6">
    <source>
        <dbReference type="PROSITE-ProRule" id="PRU00226"/>
    </source>
</evidence>
<evidence type="ECO:0000255" key="7">
    <source>
        <dbReference type="PROSITE-ProRule" id="PRU00618"/>
    </source>
</evidence>
<evidence type="ECO:0000255" key="8">
    <source>
        <dbReference type="PROSITE-ProRule" id="PRU10027"/>
    </source>
</evidence>
<evidence type="ECO:0000269" key="9">
    <source>
    </source>
</evidence>
<evidence type="ECO:0000269" key="10">
    <source>
    </source>
</evidence>
<evidence type="ECO:0000269" key="11">
    <source>
    </source>
</evidence>
<evidence type="ECO:0000305" key="12"/>
<evidence type="ECO:0007744" key="13">
    <source>
    </source>
</evidence>
<gene>
    <name type="primary">Prkch</name>
    <name type="synonym">Pkch</name>
</gene>
<sequence length="683" mass="77919">MSSGTMKFNGYLRVRIGEAVGLQPTRWSLRHSLFKKGHQLLDPYLTVSVDQVRVGQTSTKQKTNKPTYNEEFCANVTDGGHLELAVFHETPLGYDHFVANCTLQFQELLRTAGTSDTFEGWVDLEPEGKVFVVITLTGSFTEATLQRDRIFKHFTRKRQRAMRRRVHQVNGHKFMATYLRQPTYCSHCREFIWGVFGKQGYQCQVCTCVVHKRCHHLIVTACTCQNNINKVDAKIAEQRFGINIPHKFNVHNYKVPTFCDHCGSLLWGIMRQGLQCKICKMNVHIRCQANVAPNCGVNAVELAKTLAGMGLQPGNISPTSKLISRSTLRRQGKEGSKEGNGIGVNSSSRFGIDNFEFIRVLGKGSFGKVMLARIKETGELYAVKVLKKDVILQDDDVECTMTEKRILSLARNHPFLTQLFCCFQTPDRLFFVMEFVNGGDLMFHIQKSRRFDEARARFYAAEIISALMFLHEKGIIYRDLKLDNVLLDHEGHCKLADFGMCKEGICNGVTTATFCGTPDYIAPEILQEMLYGPAVDWWAMGVLLYEMLCGHAPFEAENEDDLFEAILNDEVVYPTWLHEDATGILKSFMTKNPTMRLGSLTQGGEHEILRHPFFKEIDWAQLNHRQLEPPFRPRIKSREDVSNFDPDFIKEEPVLTPIDEGHLPMINQDEFRNFSYVSPELQL</sequence>
<reference key="1">
    <citation type="journal article" date="1990" name="J. Biol. Chem.">
        <title>A phorbol ester receptor/protein kinase, nPKC eta, a new member of the protein kinase C family predominantly expressed in lung and skin.</title>
        <authorList>
            <person name="Osada S."/>
            <person name="Mizuno K."/>
            <person name="Saido T.C."/>
            <person name="Akita Y."/>
            <person name="Suzuki K."/>
            <person name="Kuroki T."/>
            <person name="Ohno S."/>
        </authorList>
    </citation>
    <scope>NUCLEOTIDE SEQUENCE [MRNA]</scope>
    <source>
        <tissue>Epidermis</tissue>
    </source>
</reference>
<reference key="2">
    <citation type="journal article" date="2005" name="Science">
        <title>The transcriptional landscape of the mammalian genome.</title>
        <authorList>
            <person name="Carninci P."/>
            <person name="Kasukawa T."/>
            <person name="Katayama S."/>
            <person name="Gough J."/>
            <person name="Frith M.C."/>
            <person name="Maeda N."/>
            <person name="Oyama R."/>
            <person name="Ravasi T."/>
            <person name="Lenhard B."/>
            <person name="Wells C."/>
            <person name="Kodzius R."/>
            <person name="Shimokawa K."/>
            <person name="Bajic V.B."/>
            <person name="Brenner S.E."/>
            <person name="Batalov S."/>
            <person name="Forrest A.R."/>
            <person name="Zavolan M."/>
            <person name="Davis M.J."/>
            <person name="Wilming L.G."/>
            <person name="Aidinis V."/>
            <person name="Allen J.E."/>
            <person name="Ambesi-Impiombato A."/>
            <person name="Apweiler R."/>
            <person name="Aturaliya R.N."/>
            <person name="Bailey T.L."/>
            <person name="Bansal M."/>
            <person name="Baxter L."/>
            <person name="Beisel K.W."/>
            <person name="Bersano T."/>
            <person name="Bono H."/>
            <person name="Chalk A.M."/>
            <person name="Chiu K.P."/>
            <person name="Choudhary V."/>
            <person name="Christoffels A."/>
            <person name="Clutterbuck D.R."/>
            <person name="Crowe M.L."/>
            <person name="Dalla E."/>
            <person name="Dalrymple B.P."/>
            <person name="de Bono B."/>
            <person name="Della Gatta G."/>
            <person name="di Bernardo D."/>
            <person name="Down T."/>
            <person name="Engstrom P."/>
            <person name="Fagiolini M."/>
            <person name="Faulkner G."/>
            <person name="Fletcher C.F."/>
            <person name="Fukushima T."/>
            <person name="Furuno M."/>
            <person name="Futaki S."/>
            <person name="Gariboldi M."/>
            <person name="Georgii-Hemming P."/>
            <person name="Gingeras T.R."/>
            <person name="Gojobori T."/>
            <person name="Green R.E."/>
            <person name="Gustincich S."/>
            <person name="Harbers M."/>
            <person name="Hayashi Y."/>
            <person name="Hensch T.K."/>
            <person name="Hirokawa N."/>
            <person name="Hill D."/>
            <person name="Huminiecki L."/>
            <person name="Iacono M."/>
            <person name="Ikeo K."/>
            <person name="Iwama A."/>
            <person name="Ishikawa T."/>
            <person name="Jakt M."/>
            <person name="Kanapin A."/>
            <person name="Katoh M."/>
            <person name="Kawasawa Y."/>
            <person name="Kelso J."/>
            <person name="Kitamura H."/>
            <person name="Kitano H."/>
            <person name="Kollias G."/>
            <person name="Krishnan S.P."/>
            <person name="Kruger A."/>
            <person name="Kummerfeld S.K."/>
            <person name="Kurochkin I.V."/>
            <person name="Lareau L.F."/>
            <person name="Lazarevic D."/>
            <person name="Lipovich L."/>
            <person name="Liu J."/>
            <person name="Liuni S."/>
            <person name="McWilliam S."/>
            <person name="Madan Babu M."/>
            <person name="Madera M."/>
            <person name="Marchionni L."/>
            <person name="Matsuda H."/>
            <person name="Matsuzawa S."/>
            <person name="Miki H."/>
            <person name="Mignone F."/>
            <person name="Miyake S."/>
            <person name="Morris K."/>
            <person name="Mottagui-Tabar S."/>
            <person name="Mulder N."/>
            <person name="Nakano N."/>
            <person name="Nakauchi H."/>
            <person name="Ng P."/>
            <person name="Nilsson R."/>
            <person name="Nishiguchi S."/>
            <person name="Nishikawa S."/>
            <person name="Nori F."/>
            <person name="Ohara O."/>
            <person name="Okazaki Y."/>
            <person name="Orlando V."/>
            <person name="Pang K.C."/>
            <person name="Pavan W.J."/>
            <person name="Pavesi G."/>
            <person name="Pesole G."/>
            <person name="Petrovsky N."/>
            <person name="Piazza S."/>
            <person name="Reed J."/>
            <person name="Reid J.F."/>
            <person name="Ring B.Z."/>
            <person name="Ringwald M."/>
            <person name="Rost B."/>
            <person name="Ruan Y."/>
            <person name="Salzberg S.L."/>
            <person name="Sandelin A."/>
            <person name="Schneider C."/>
            <person name="Schoenbach C."/>
            <person name="Sekiguchi K."/>
            <person name="Semple C.A."/>
            <person name="Seno S."/>
            <person name="Sessa L."/>
            <person name="Sheng Y."/>
            <person name="Shibata Y."/>
            <person name="Shimada H."/>
            <person name="Shimada K."/>
            <person name="Silva D."/>
            <person name="Sinclair B."/>
            <person name="Sperling S."/>
            <person name="Stupka E."/>
            <person name="Sugiura K."/>
            <person name="Sultana R."/>
            <person name="Takenaka Y."/>
            <person name="Taki K."/>
            <person name="Tammoja K."/>
            <person name="Tan S.L."/>
            <person name="Tang S."/>
            <person name="Taylor M.S."/>
            <person name="Tegner J."/>
            <person name="Teichmann S.A."/>
            <person name="Ueda H.R."/>
            <person name="van Nimwegen E."/>
            <person name="Verardo R."/>
            <person name="Wei C.L."/>
            <person name="Yagi K."/>
            <person name="Yamanishi H."/>
            <person name="Zabarovsky E."/>
            <person name="Zhu S."/>
            <person name="Zimmer A."/>
            <person name="Hide W."/>
            <person name="Bult C."/>
            <person name="Grimmond S.M."/>
            <person name="Teasdale R.D."/>
            <person name="Liu E.T."/>
            <person name="Brusic V."/>
            <person name="Quackenbush J."/>
            <person name="Wahlestedt C."/>
            <person name="Mattick J.S."/>
            <person name="Hume D.A."/>
            <person name="Kai C."/>
            <person name="Sasaki D."/>
            <person name="Tomaru Y."/>
            <person name="Fukuda S."/>
            <person name="Kanamori-Katayama M."/>
            <person name="Suzuki M."/>
            <person name="Aoki J."/>
            <person name="Arakawa T."/>
            <person name="Iida J."/>
            <person name="Imamura K."/>
            <person name="Itoh M."/>
            <person name="Kato T."/>
            <person name="Kawaji H."/>
            <person name="Kawagashira N."/>
            <person name="Kawashima T."/>
            <person name="Kojima M."/>
            <person name="Kondo S."/>
            <person name="Konno H."/>
            <person name="Nakano K."/>
            <person name="Ninomiya N."/>
            <person name="Nishio T."/>
            <person name="Okada M."/>
            <person name="Plessy C."/>
            <person name="Shibata K."/>
            <person name="Shiraki T."/>
            <person name="Suzuki S."/>
            <person name="Tagami M."/>
            <person name="Waki K."/>
            <person name="Watahiki A."/>
            <person name="Okamura-Oho Y."/>
            <person name="Suzuki H."/>
            <person name="Kawai J."/>
            <person name="Hayashizaki Y."/>
        </authorList>
    </citation>
    <scope>NUCLEOTIDE SEQUENCE [LARGE SCALE MRNA]</scope>
    <source>
        <strain>C57BL/6J</strain>
        <tissue>Embryo</tissue>
    </source>
</reference>
<reference key="3">
    <citation type="journal article" date="2004" name="Genome Res.">
        <title>The status, quality, and expansion of the NIH full-length cDNA project: the Mammalian Gene Collection (MGC).</title>
        <authorList>
            <consortium name="The MGC Project Team"/>
        </authorList>
    </citation>
    <scope>NUCLEOTIDE SEQUENCE [LARGE SCALE MRNA]</scope>
    <source>
        <strain>FVB/N-3</strain>
        <tissue>Mammary tumor</tissue>
    </source>
</reference>
<reference key="4">
    <citation type="journal article" date="2000" name="Mol. Cell">
        <title>A PKC-eta/Fyn-dependent pathway leading to keratinocyte growth arrest and differentiation.</title>
        <authorList>
            <person name="Cabodi S."/>
            <person name="Calautti E."/>
            <person name="Talora C."/>
            <person name="Kuroki T."/>
            <person name="Stein P.L."/>
            <person name="Dotto G.P."/>
        </authorList>
    </citation>
    <scope>FUNCTION</scope>
    <scope>INTERACTION WITH FYN</scope>
    <scope>SUBCELLULAR LOCATION</scope>
</reference>
<reference key="5">
    <citation type="journal article" date="2008" name="Int. Immunol.">
        <title>PKC eta directs induction of IRF-4 expression and Ig kappa gene rearrangement in pre-BCR signaling pathway.</title>
        <authorList>
            <person name="Oda A."/>
            <person name="Ono T."/>
            <person name="Yamamoto M."/>
            <person name="Goitsuka R."/>
            <person name="Kitamura D."/>
        </authorList>
    </citation>
    <scope>FUNCTION IN B-CELL SIGNALING</scope>
</reference>
<reference key="6">
    <citation type="journal article" date="2009" name="Immunity">
        <title>The phagosomal proteome in interferon-gamma-activated macrophages.</title>
        <authorList>
            <person name="Trost M."/>
            <person name="English L."/>
            <person name="Lemieux S."/>
            <person name="Courcelles M."/>
            <person name="Desjardins M."/>
            <person name="Thibault P."/>
        </authorList>
    </citation>
    <scope>PHOSPHORYLATION [LARGE SCALE ANALYSIS] AT SER-317</scope>
    <scope>IDENTIFICATION BY MASS SPECTROMETRY [LARGE SCALE ANALYSIS]</scope>
</reference>
<reference key="7">
    <citation type="journal article" date="2011" name="Mol. Biol. Cell">
        <title>Direct binding of RalA to PKC? and its crucial role in morphological change during keratinocyte differentiation.</title>
        <authorList>
            <person name="Shirai Y."/>
            <person name="Morioka S."/>
            <person name="Sakuma M."/>
            <person name="Yoshino K."/>
            <person name="Otsuji C."/>
            <person name="Sakai N."/>
            <person name="Kashiwagi K."/>
            <person name="Chida K."/>
            <person name="Shirakawa R."/>
            <person name="Horiuchi H."/>
            <person name="Nishigori C."/>
            <person name="Ueyama T."/>
            <person name="Saito N."/>
        </authorList>
    </citation>
    <scope>FUNCTION</scope>
    <scope>INTERACTION WITH RALA</scope>
    <scope>SUBCELLULAR LOCATION</scope>
</reference>